<name>THEM6_DANRE</name>
<sequence>MLLWFLSGSLLLFGTFDVWYFLRGLWVALRCCFQSPIRDVLAEQVVHGRVLLHDMDFMCHMNNARYLRECDFARFAHGTRIGLFMAARALKATMVVGATTIRYRRSLALGEGFELRTRIVSWDEKSFYLEQRFVSKSDGFISAVMLCRQNVIRGSPQNILEFLCKRKVDCPDISEDLQHWIRFISASSQALRAESGLDDKTK</sequence>
<protein>
    <recommendedName>
        <fullName>Protein THEM6</fullName>
    </recommendedName>
</protein>
<dbReference type="EMBL" id="CT027572">
    <property type="protein sequence ID" value="CAQ14962.1"/>
    <property type="molecule type" value="Genomic_DNA"/>
</dbReference>
<dbReference type="EMBL" id="BC159266">
    <property type="protein sequence ID" value="AAI59267.1"/>
    <property type="molecule type" value="mRNA"/>
</dbReference>
<dbReference type="RefSeq" id="NP_001116101.1">
    <property type="nucleotide sequence ID" value="NM_001122629.1"/>
</dbReference>
<dbReference type="SMR" id="B0JZP3"/>
<dbReference type="FunCoup" id="B0JZP3">
    <property type="interactions" value="265"/>
</dbReference>
<dbReference type="PaxDb" id="7955-ENSDARP00000054333"/>
<dbReference type="GeneID" id="100142654"/>
<dbReference type="KEGG" id="dre:100142654"/>
<dbReference type="AGR" id="ZFIN:ZDB-GENE-070912-341"/>
<dbReference type="ZFIN" id="ZDB-GENE-070912-341">
    <property type="gene designation" value="si:ch73-52e5.2"/>
</dbReference>
<dbReference type="eggNOG" id="KOG4366">
    <property type="taxonomic scope" value="Eukaryota"/>
</dbReference>
<dbReference type="InParanoid" id="B0JZP3"/>
<dbReference type="OrthoDB" id="265761at2759"/>
<dbReference type="PhylomeDB" id="B0JZP3"/>
<dbReference type="TreeFam" id="TF324625"/>
<dbReference type="PRO" id="PR:B0JZP3"/>
<dbReference type="Proteomes" id="UP000000437">
    <property type="component" value="Chromosome 2"/>
</dbReference>
<dbReference type="GO" id="GO:0005576">
    <property type="term" value="C:extracellular region"/>
    <property type="evidence" value="ECO:0007669"/>
    <property type="project" value="UniProtKB-SubCell"/>
</dbReference>
<dbReference type="CDD" id="cd00586">
    <property type="entry name" value="4HBT"/>
    <property type="match status" value="1"/>
</dbReference>
<dbReference type="Gene3D" id="3.10.129.10">
    <property type="entry name" value="Hotdog Thioesterase"/>
    <property type="match status" value="1"/>
</dbReference>
<dbReference type="InterPro" id="IPR029069">
    <property type="entry name" value="HotDog_dom_sf"/>
</dbReference>
<dbReference type="InterPro" id="IPR051490">
    <property type="entry name" value="THEM6_lcsJ_thioesterase"/>
</dbReference>
<dbReference type="PANTHER" id="PTHR12475">
    <property type="match status" value="1"/>
</dbReference>
<dbReference type="PANTHER" id="PTHR12475:SF4">
    <property type="entry name" value="PROTEIN THEM6"/>
    <property type="match status" value="1"/>
</dbReference>
<dbReference type="Pfam" id="PF13279">
    <property type="entry name" value="4HBT_2"/>
    <property type="match status" value="1"/>
</dbReference>
<dbReference type="SUPFAM" id="SSF54637">
    <property type="entry name" value="Thioesterase/thiol ester dehydrase-isomerase"/>
    <property type="match status" value="1"/>
</dbReference>
<comment type="subcellular location">
    <subcellularLocation>
        <location evidence="2">Secreted</location>
    </subcellularLocation>
</comment>
<comment type="similarity">
    <text evidence="2">Belongs to the THEM6 family.</text>
</comment>
<keyword id="KW-1185">Reference proteome</keyword>
<keyword id="KW-0964">Secreted</keyword>
<keyword id="KW-0732">Signal</keyword>
<proteinExistence type="evidence at transcript level"/>
<reference key="1">
    <citation type="submission" date="2008-02" db="EMBL/GenBank/DDBJ databases">
        <authorList>
            <person name="Kerry G."/>
        </authorList>
    </citation>
    <scope>NUCLEOTIDE SEQUENCE</scope>
</reference>
<reference key="2">
    <citation type="submission" date="2008-02" db="EMBL/GenBank/DDBJ databases">
        <authorList>
            <consortium name="NIH - Zebrafish Gene Collection (ZGC) project"/>
        </authorList>
    </citation>
    <scope>NUCLEOTIDE SEQUENCE [LARGE SCALE MRNA]</scope>
    <source>
        <tissue>Embryo</tissue>
    </source>
</reference>
<feature type="signal peptide" evidence="1">
    <location>
        <begin position="1"/>
        <end position="24"/>
    </location>
</feature>
<feature type="chain" id="PRO_0000352883" description="Protein THEM6">
    <location>
        <begin position="25"/>
        <end position="202"/>
    </location>
</feature>
<feature type="sequence conflict" description="In Ref. 1; CAQ14962." evidence="2" ref="1">
    <original>D</original>
    <variation>E</variation>
    <location>
        <position position="176"/>
    </location>
</feature>
<accession>B0JZP3</accession>
<accession>B0V2T1</accession>
<organism>
    <name type="scientific">Danio rerio</name>
    <name type="common">Zebrafish</name>
    <name type="synonym">Brachydanio rerio</name>
    <dbReference type="NCBI Taxonomy" id="7955"/>
    <lineage>
        <taxon>Eukaryota</taxon>
        <taxon>Metazoa</taxon>
        <taxon>Chordata</taxon>
        <taxon>Craniata</taxon>
        <taxon>Vertebrata</taxon>
        <taxon>Euteleostomi</taxon>
        <taxon>Actinopterygii</taxon>
        <taxon>Neopterygii</taxon>
        <taxon>Teleostei</taxon>
        <taxon>Ostariophysi</taxon>
        <taxon>Cypriniformes</taxon>
        <taxon>Danionidae</taxon>
        <taxon>Danioninae</taxon>
        <taxon>Danio</taxon>
    </lineage>
</organism>
<evidence type="ECO:0000255" key="1"/>
<evidence type="ECO:0000305" key="2"/>
<gene>
    <name type="primary">them6</name>
    <name type="ORF">si:ch73-52e5.2</name>
</gene>